<dbReference type="EC" id="3.5.1.98" evidence="2"/>
<dbReference type="EMBL" id="AK029933">
    <property type="protein sequence ID" value="BAE43272.1"/>
    <property type="molecule type" value="mRNA"/>
</dbReference>
<dbReference type="EMBL" id="AK155250">
    <property type="protein sequence ID" value="BAE33147.1"/>
    <property type="molecule type" value="mRNA"/>
</dbReference>
<dbReference type="EMBL" id="AK162369">
    <property type="protein sequence ID" value="BAE36877.1"/>
    <property type="molecule type" value="mRNA"/>
</dbReference>
<dbReference type="EMBL" id="BC066052">
    <property type="protein sequence ID" value="AAH66052.1"/>
    <property type="molecule type" value="mRNA"/>
</dbReference>
<dbReference type="CCDS" id="CCDS48324.1">
    <molecule id="Q6NZM9-1"/>
</dbReference>
<dbReference type="RefSeq" id="NP_997108.1">
    <molecule id="Q6NZM9-1"/>
    <property type="nucleotide sequence ID" value="NM_207225.2"/>
</dbReference>
<dbReference type="RefSeq" id="XP_017174977.1">
    <molecule id="Q6NZM9-1"/>
    <property type="nucleotide sequence ID" value="XM_017319488.2"/>
</dbReference>
<dbReference type="RefSeq" id="XP_030108401.1">
    <molecule id="Q6NZM9-1"/>
    <property type="nucleotide sequence ID" value="XM_030252541.1"/>
</dbReference>
<dbReference type="SMR" id="Q6NZM9"/>
<dbReference type="BioGRID" id="229009">
    <property type="interactions" value="385"/>
</dbReference>
<dbReference type="CORUM" id="Q6NZM9"/>
<dbReference type="DIP" id="DIP-36317N"/>
<dbReference type="FunCoup" id="Q6NZM9">
    <property type="interactions" value="2667"/>
</dbReference>
<dbReference type="IntAct" id="Q6NZM9">
    <property type="interactions" value="368"/>
</dbReference>
<dbReference type="MINT" id="Q6NZM9"/>
<dbReference type="STRING" id="10090.ENSMUSP00000095249"/>
<dbReference type="BindingDB" id="Q6NZM9"/>
<dbReference type="ChEMBL" id="CHEMBL3832944"/>
<dbReference type="GlyGen" id="Q6NZM9">
    <property type="glycosylation" value="2 sites, 1 O-linked glycan (1 site)"/>
</dbReference>
<dbReference type="iPTMnet" id="Q6NZM9"/>
<dbReference type="PhosphoSitePlus" id="Q6NZM9"/>
<dbReference type="jPOST" id="Q6NZM9"/>
<dbReference type="PaxDb" id="10090-ENSMUSP00000095249"/>
<dbReference type="PeptideAtlas" id="Q6NZM9"/>
<dbReference type="ProteomicsDB" id="269683">
    <molecule id="Q6NZM9-1"/>
</dbReference>
<dbReference type="ProteomicsDB" id="269684">
    <molecule id="Q6NZM9-2"/>
</dbReference>
<dbReference type="Pumba" id="Q6NZM9"/>
<dbReference type="Antibodypedia" id="3835">
    <property type="antibodies" value="1229 antibodies from 51 providers"/>
</dbReference>
<dbReference type="DNASU" id="208727"/>
<dbReference type="Ensembl" id="ENSMUST00000008995.15">
    <molecule id="Q6NZM9-1"/>
    <property type="protein sequence ID" value="ENSMUSP00000008995.9"/>
    <property type="gene ID" value="ENSMUSG00000026313.17"/>
</dbReference>
<dbReference type="Ensembl" id="ENSMUST00000097644.9">
    <molecule id="Q6NZM9-1"/>
    <property type="protein sequence ID" value="ENSMUSP00000095249.4"/>
    <property type="gene ID" value="ENSMUSG00000026313.17"/>
</dbReference>
<dbReference type="GeneID" id="208727"/>
<dbReference type="KEGG" id="mmu:208727"/>
<dbReference type="UCSC" id="uc007cbe.2">
    <molecule id="Q6NZM9-2"/>
    <property type="organism name" value="mouse"/>
</dbReference>
<dbReference type="UCSC" id="uc007cbf.2">
    <molecule id="Q6NZM9-1"/>
    <property type="organism name" value="mouse"/>
</dbReference>
<dbReference type="AGR" id="MGI:3036234"/>
<dbReference type="CTD" id="9759"/>
<dbReference type="MGI" id="MGI:3036234">
    <property type="gene designation" value="Hdac4"/>
</dbReference>
<dbReference type="VEuPathDB" id="HostDB:ENSMUSG00000026313"/>
<dbReference type="eggNOG" id="KOG1343">
    <property type="taxonomic scope" value="Eukaryota"/>
</dbReference>
<dbReference type="GeneTree" id="ENSGT00940000157440"/>
<dbReference type="HOGENOM" id="CLU_006530_2_0_1"/>
<dbReference type="InParanoid" id="Q6NZM9"/>
<dbReference type="OMA" id="HAHAPIT"/>
<dbReference type="OrthoDB" id="424012at2759"/>
<dbReference type="PhylomeDB" id="Q6NZM9"/>
<dbReference type="TreeFam" id="TF106174"/>
<dbReference type="Reactome" id="R-MMU-350054">
    <property type="pathway name" value="Notch-HLH transcription pathway"/>
</dbReference>
<dbReference type="Reactome" id="R-MMU-4090294">
    <property type="pathway name" value="SUMOylation of intracellular receptors"/>
</dbReference>
<dbReference type="Reactome" id="R-MMU-4551638">
    <property type="pathway name" value="SUMOylation of chromatin organization proteins"/>
</dbReference>
<dbReference type="Reactome" id="R-MMU-8951936">
    <property type="pathway name" value="RUNX3 regulates p14-ARF"/>
</dbReference>
<dbReference type="BioGRID-ORCS" id="208727">
    <property type="hits" value="1 hit in 84 CRISPR screens"/>
</dbReference>
<dbReference type="PRO" id="PR:Q6NZM9"/>
<dbReference type="Proteomes" id="UP000000589">
    <property type="component" value="Chromosome 1"/>
</dbReference>
<dbReference type="RNAct" id="Q6NZM9">
    <property type="molecule type" value="protein"/>
</dbReference>
<dbReference type="Bgee" id="ENSMUSG00000026313">
    <property type="expression patterns" value="Expressed in ear vesicle and 238 other cell types or tissues"/>
</dbReference>
<dbReference type="ExpressionAtlas" id="Q6NZM9">
    <property type="expression patterns" value="baseline and differential"/>
</dbReference>
<dbReference type="GO" id="GO:0031672">
    <property type="term" value="C:A band"/>
    <property type="evidence" value="ECO:0000266"/>
    <property type="project" value="MGI"/>
</dbReference>
<dbReference type="GO" id="GO:0042641">
    <property type="term" value="C:actomyosin"/>
    <property type="evidence" value="ECO:0000314"/>
    <property type="project" value="MGI"/>
</dbReference>
<dbReference type="GO" id="GO:0005737">
    <property type="term" value="C:cytoplasm"/>
    <property type="evidence" value="ECO:0000314"/>
    <property type="project" value="MGI"/>
</dbReference>
<dbReference type="GO" id="GO:0005829">
    <property type="term" value="C:cytosol"/>
    <property type="evidence" value="ECO:0000314"/>
    <property type="project" value="MGI"/>
</dbReference>
<dbReference type="GO" id="GO:0031594">
    <property type="term" value="C:neuromuscular junction"/>
    <property type="evidence" value="ECO:0000314"/>
    <property type="project" value="MGI"/>
</dbReference>
<dbReference type="GO" id="GO:0016607">
    <property type="term" value="C:nuclear speck"/>
    <property type="evidence" value="ECO:0007669"/>
    <property type="project" value="Ensembl"/>
</dbReference>
<dbReference type="GO" id="GO:0005654">
    <property type="term" value="C:nucleoplasm"/>
    <property type="evidence" value="ECO:0000304"/>
    <property type="project" value="Reactome"/>
</dbReference>
<dbReference type="GO" id="GO:0005634">
    <property type="term" value="C:nucleus"/>
    <property type="evidence" value="ECO:0000314"/>
    <property type="project" value="MGI"/>
</dbReference>
<dbReference type="GO" id="GO:0030017">
    <property type="term" value="C:sarcomere"/>
    <property type="evidence" value="ECO:0000266"/>
    <property type="project" value="MGI"/>
</dbReference>
<dbReference type="GO" id="GO:0030018">
    <property type="term" value="C:Z disc"/>
    <property type="evidence" value="ECO:0000266"/>
    <property type="project" value="MGI"/>
</dbReference>
<dbReference type="GO" id="GO:0003682">
    <property type="term" value="F:chromatin binding"/>
    <property type="evidence" value="ECO:0000314"/>
    <property type="project" value="MGI"/>
</dbReference>
<dbReference type="GO" id="GO:0003677">
    <property type="term" value="F:DNA binding"/>
    <property type="evidence" value="ECO:0000314"/>
    <property type="project" value="MGI"/>
</dbReference>
<dbReference type="GO" id="GO:0140297">
    <property type="term" value="F:DNA-binding transcription factor binding"/>
    <property type="evidence" value="ECO:0000353"/>
    <property type="project" value="UniProtKB"/>
</dbReference>
<dbReference type="GO" id="GO:0004407">
    <property type="term" value="F:histone deacetylase activity"/>
    <property type="evidence" value="ECO:0000266"/>
    <property type="project" value="MGI"/>
</dbReference>
<dbReference type="GO" id="GO:0141221">
    <property type="term" value="F:histone deacetylase activity, hydrolytic mechanism"/>
    <property type="evidence" value="ECO:0007669"/>
    <property type="project" value="UniProtKB-EC"/>
</dbReference>
<dbReference type="GO" id="GO:0046872">
    <property type="term" value="F:metal ion binding"/>
    <property type="evidence" value="ECO:0007669"/>
    <property type="project" value="UniProtKB-KW"/>
</dbReference>
<dbReference type="GO" id="GO:0019901">
    <property type="term" value="F:protein kinase binding"/>
    <property type="evidence" value="ECO:0000353"/>
    <property type="project" value="UniProtKB"/>
</dbReference>
<dbReference type="GO" id="GO:0033558">
    <property type="term" value="F:protein lysine deacetylase activity"/>
    <property type="evidence" value="ECO:0000314"/>
    <property type="project" value="MGI"/>
</dbReference>
<dbReference type="GO" id="GO:0003714">
    <property type="term" value="F:transcription corepressor activity"/>
    <property type="evidence" value="ECO:0000316"/>
    <property type="project" value="MGI"/>
</dbReference>
<dbReference type="GO" id="GO:0008283">
    <property type="term" value="P:cell population proliferation"/>
    <property type="evidence" value="ECO:0000314"/>
    <property type="project" value="MGI"/>
</dbReference>
<dbReference type="GO" id="GO:0006325">
    <property type="term" value="P:chromatin organization"/>
    <property type="evidence" value="ECO:0007669"/>
    <property type="project" value="UniProtKB-KW"/>
</dbReference>
<dbReference type="GO" id="GO:0008285">
    <property type="term" value="P:negative regulation of cell population proliferation"/>
    <property type="evidence" value="ECO:0000314"/>
    <property type="project" value="MGI"/>
</dbReference>
<dbReference type="GO" id="GO:0045892">
    <property type="term" value="P:negative regulation of DNA-templated transcription"/>
    <property type="evidence" value="ECO:0000314"/>
    <property type="project" value="MGI"/>
</dbReference>
<dbReference type="GO" id="GO:0045820">
    <property type="term" value="P:negative regulation of glycolytic process"/>
    <property type="evidence" value="ECO:0000315"/>
    <property type="project" value="BHF-UCL"/>
</dbReference>
<dbReference type="GO" id="GO:1902894">
    <property type="term" value="P:negative regulation of miRNA transcription"/>
    <property type="evidence" value="ECO:0000315"/>
    <property type="project" value="BHF-UCL"/>
</dbReference>
<dbReference type="GO" id="GO:0045668">
    <property type="term" value="P:negative regulation of osteoblast differentiation"/>
    <property type="evidence" value="ECO:0000315"/>
    <property type="project" value="MGI"/>
</dbReference>
<dbReference type="GO" id="GO:0000122">
    <property type="term" value="P:negative regulation of transcription by RNA polymerase II"/>
    <property type="evidence" value="ECO:0000314"/>
    <property type="project" value="MGI"/>
</dbReference>
<dbReference type="GO" id="GO:0002076">
    <property type="term" value="P:osteoblast development"/>
    <property type="evidence" value="ECO:0000315"/>
    <property type="project" value="MGI"/>
</dbReference>
<dbReference type="GO" id="GO:0001649">
    <property type="term" value="P:osteoblast differentiation"/>
    <property type="evidence" value="ECO:0000315"/>
    <property type="project" value="MGI"/>
</dbReference>
<dbReference type="GO" id="GO:0045893">
    <property type="term" value="P:positive regulation of DNA-templated transcription"/>
    <property type="evidence" value="ECO:0000315"/>
    <property type="project" value="BHF-UCL"/>
</dbReference>
<dbReference type="GO" id="GO:0033235">
    <property type="term" value="P:positive regulation of protein sumoylation"/>
    <property type="evidence" value="ECO:0000250"/>
    <property type="project" value="UniProtKB"/>
</dbReference>
<dbReference type="GO" id="GO:0045944">
    <property type="term" value="P:positive regulation of transcription by RNA polymerase II"/>
    <property type="evidence" value="ECO:0000315"/>
    <property type="project" value="BHF-UCL"/>
</dbReference>
<dbReference type="GO" id="GO:0010882">
    <property type="term" value="P:regulation of cardiac muscle contraction by calcium ion signaling"/>
    <property type="evidence" value="ECO:0000315"/>
    <property type="project" value="MGI"/>
</dbReference>
<dbReference type="GO" id="GO:0048742">
    <property type="term" value="P:regulation of skeletal muscle fiber development"/>
    <property type="evidence" value="ECO:0000316"/>
    <property type="project" value="MGI"/>
</dbReference>
<dbReference type="GO" id="GO:1902809">
    <property type="term" value="P:regulation of skeletal muscle fiber differentiation"/>
    <property type="evidence" value="ECO:0000316"/>
    <property type="project" value="MGI"/>
</dbReference>
<dbReference type="GO" id="GO:0014894">
    <property type="term" value="P:response to denervation involved in regulation of muscle adaptation"/>
    <property type="evidence" value="ECO:0000315"/>
    <property type="project" value="BHF-UCL"/>
</dbReference>
<dbReference type="GO" id="GO:0001501">
    <property type="term" value="P:skeletal system development"/>
    <property type="evidence" value="ECO:0000315"/>
    <property type="project" value="MGI"/>
</dbReference>
<dbReference type="CDD" id="cd10162">
    <property type="entry name" value="ClassIIa_HDAC4_Gln-rich-N"/>
    <property type="match status" value="1"/>
</dbReference>
<dbReference type="CDD" id="cd10006">
    <property type="entry name" value="HDAC4"/>
    <property type="match status" value="1"/>
</dbReference>
<dbReference type="FunFam" id="3.40.800.20:FF:000002">
    <property type="entry name" value="Histone deacetylase"/>
    <property type="match status" value="1"/>
</dbReference>
<dbReference type="Gene3D" id="6.10.250.1550">
    <property type="match status" value="1"/>
</dbReference>
<dbReference type="Gene3D" id="3.40.800.20">
    <property type="entry name" value="Histone deacetylase domain"/>
    <property type="match status" value="1"/>
</dbReference>
<dbReference type="InterPro" id="IPR046949">
    <property type="entry name" value="HDAC4/5/7/9"/>
</dbReference>
<dbReference type="InterPro" id="IPR000286">
    <property type="entry name" value="His_deacetylse"/>
</dbReference>
<dbReference type="InterPro" id="IPR023801">
    <property type="entry name" value="His_deacetylse_dom"/>
</dbReference>
<dbReference type="InterPro" id="IPR037138">
    <property type="entry name" value="His_deacetylse_dom_sf"/>
</dbReference>
<dbReference type="InterPro" id="IPR024643">
    <property type="entry name" value="Hist_deacetylase_Gln_rich_N"/>
</dbReference>
<dbReference type="InterPro" id="IPR023696">
    <property type="entry name" value="Ureohydrolase_dom_sf"/>
</dbReference>
<dbReference type="PANTHER" id="PTHR45364:SF13">
    <property type="entry name" value="HISTONE DEACETYLASE"/>
    <property type="match status" value="1"/>
</dbReference>
<dbReference type="PANTHER" id="PTHR45364">
    <property type="entry name" value="HISTONE DEACETYLASE 9-RELATED"/>
    <property type="match status" value="1"/>
</dbReference>
<dbReference type="Pfam" id="PF12203">
    <property type="entry name" value="HDAC4_Gln"/>
    <property type="match status" value="1"/>
</dbReference>
<dbReference type="Pfam" id="PF00850">
    <property type="entry name" value="Hist_deacetyl"/>
    <property type="match status" value="1"/>
</dbReference>
<dbReference type="PIRSF" id="PIRSF037911">
    <property type="entry name" value="HDAC_II_euk"/>
    <property type="match status" value="1"/>
</dbReference>
<dbReference type="PRINTS" id="PR01270">
    <property type="entry name" value="HDASUPER"/>
</dbReference>
<dbReference type="SUPFAM" id="SSF52768">
    <property type="entry name" value="Arginase/deacetylase"/>
    <property type="match status" value="1"/>
</dbReference>
<accession>Q6NZM9</accession>
<accession>Q3TRZ9</accession>
<accession>Q3U2J3</accession>
<accession>Q3V3Y4</accession>
<protein>
    <recommendedName>
        <fullName evidence="2">Histone deacetylase 4</fullName>
        <shortName>HD4</shortName>
        <ecNumber evidence="2">3.5.1.98</ecNumber>
    </recommendedName>
</protein>
<gene>
    <name type="primary">Hdac4</name>
</gene>
<keyword id="KW-0025">Alternative splicing</keyword>
<keyword id="KW-0156">Chromatin regulator</keyword>
<keyword id="KW-0175">Coiled coil</keyword>
<keyword id="KW-0963">Cytoplasm</keyword>
<keyword id="KW-0378">Hydrolase</keyword>
<keyword id="KW-1017">Isopeptide bond</keyword>
<keyword id="KW-0479">Metal-binding</keyword>
<keyword id="KW-0539">Nucleus</keyword>
<keyword id="KW-0597">Phosphoprotein</keyword>
<keyword id="KW-1185">Reference proteome</keyword>
<keyword id="KW-0678">Repressor</keyword>
<keyword id="KW-0804">Transcription</keyword>
<keyword id="KW-0805">Transcription regulation</keyword>
<keyword id="KW-0832">Ubl conjugation</keyword>
<keyword id="KW-0862">Zinc</keyword>
<evidence type="ECO:0000250" key="1"/>
<evidence type="ECO:0000250" key="2">
    <source>
        <dbReference type="UniProtKB" id="P56524"/>
    </source>
</evidence>
<evidence type="ECO:0000250" key="3">
    <source>
        <dbReference type="UniProtKB" id="Q99P99"/>
    </source>
</evidence>
<evidence type="ECO:0000255" key="4"/>
<evidence type="ECO:0000256" key="5">
    <source>
        <dbReference type="SAM" id="MobiDB-lite"/>
    </source>
</evidence>
<evidence type="ECO:0000269" key="6">
    <source>
    </source>
</evidence>
<evidence type="ECO:0000269" key="7">
    <source>
    </source>
</evidence>
<evidence type="ECO:0000269" key="8">
    <source>
    </source>
</evidence>
<evidence type="ECO:0000269" key="9">
    <source>
    </source>
</evidence>
<evidence type="ECO:0000269" key="10">
    <source>
    </source>
</evidence>
<evidence type="ECO:0000269" key="11">
    <source>
    </source>
</evidence>
<evidence type="ECO:0000269" key="12">
    <source>
    </source>
</evidence>
<evidence type="ECO:0000269" key="13">
    <source>
    </source>
</evidence>
<evidence type="ECO:0000303" key="14">
    <source>
    </source>
</evidence>
<evidence type="ECO:0000305" key="15"/>
<evidence type="ECO:0007744" key="16">
    <source>
    </source>
</evidence>
<evidence type="ECO:0007744" key="17">
    <source>
    </source>
</evidence>
<comment type="function">
    <text evidence="2">Responsible for the deacetylation of lysine residues on the N-terminal part of the core histones (H2A, H2B, H3 and H4). Histone deacetylation gives a tag for epigenetic repression and plays an important role in transcriptional regulation, cell cycle progression and developmental events. Histone deacetylases act via the formation of large multiprotein complexes. Involved in muscle maturation via its interaction with the myocyte enhancer factors such as MEF2A, MEF2C and MEF2D. Deacetylates HSPA1A and HSPA1A at 'Lys-77' leading to their preferential binding to co-chaperone STUB1.</text>
</comment>
<comment type="catalytic activity">
    <reaction evidence="2">
        <text>N(6)-acetyl-L-lysyl-[histone] + H2O = L-lysyl-[histone] + acetate</text>
        <dbReference type="Rhea" id="RHEA:58196"/>
        <dbReference type="Rhea" id="RHEA-COMP:9845"/>
        <dbReference type="Rhea" id="RHEA-COMP:11338"/>
        <dbReference type="ChEBI" id="CHEBI:15377"/>
        <dbReference type="ChEBI" id="CHEBI:29969"/>
        <dbReference type="ChEBI" id="CHEBI:30089"/>
        <dbReference type="ChEBI" id="CHEBI:61930"/>
        <dbReference type="EC" id="3.5.1.98"/>
    </reaction>
    <physiologicalReaction direction="left-to-right" evidence="2">
        <dbReference type="Rhea" id="RHEA:58197"/>
    </physiologicalReaction>
</comment>
<comment type="subunit">
    <text evidence="2 3 6 7 10 11 12 13">Homodimer. Homodimerization via its N-terminal domain (By similarity). Interacts with HDAC7 (PubMed:10984530). Interacts with MEF2A, MEF2C, MEF2D, MORC2 and NR2C1. Interacts with a 14-3-3 chaperone proteins in a phosphorylation dependent manner. Interacts with 14-3-3 protein YWHAB (By similarity). Interacts with BTBD14B. Interacts with KDM5B. Interacts (via PxLPxI/L motif) with ANKRA2 (via ankyrin repeats). Interacts with CUL7 (as part of the 3M complex); negatively regulated by ANKRA2. Interacts with EP300 in the presence of TFAP2C (By similarity). Interacts with AHRR (PubMed:17949687). Interacts with MYOCD (PubMed:15601857). Interacts with HSPA1A and HSPA1B leading to their deacetylation at 'Lys-77' (By similarity). Interacts with ZBTB7B; the interaction allows the recruitment of HDAC4 on CD8 loci for deacetylation and possible inhibition of CD8 genes expression (PubMed:22730529). Interacts with DHX36 (PubMed:21590736). Interacts with SIK3; this interaction leads to HDAC4 retention in the cytoplasm (PubMed:22318228). Interacts with ZNF638 (By similarity).</text>
</comment>
<comment type="interaction">
    <interactant intactId="EBI-646397">
        <id>Q6NZM9</id>
    </interactant>
    <interactant intactId="EBI-298630">
        <id>P23242</id>
        <label>Gja1</label>
    </interactant>
    <organismsDiffer>false</organismsDiffer>
    <experiments>2</experiments>
</comment>
<comment type="interaction">
    <interactant intactId="EBI-646397">
        <id>Q6NZM9</id>
    </interactant>
    <interactant intactId="EBI-903354">
        <id>Q08775</id>
        <label>Runx2</label>
    </interactant>
    <organismsDiffer>false</organismsDiffer>
    <experiments>3</experiments>
</comment>
<comment type="subcellular location">
    <subcellularLocation>
        <location evidence="12">Nucleus</location>
    </subcellularLocation>
    <subcellularLocation>
        <location evidence="12">Cytoplasm</location>
    </subcellularLocation>
    <text evidence="1 12">Shuttles between the nucleus and the cytoplasm. Upon muscle cells differentiation, it accumulates in the nuclei of myotubes, suggesting a positive role of nuclear HDAC4 in muscle differentiation. The export to cytoplasm depends on the interaction with a 14-3-3 chaperone protein and is due to its phosphorylation at Ser-245, Ser-465 and Ser-629 by CaMK4 and SIK1. The nuclear localization probably depends on sumoylation (By similarity). Interaction with SIK3 leads to HDAC4 retention in the cytoplasm (PubMed:22318228).</text>
</comment>
<comment type="alternative products">
    <event type="alternative splicing"/>
    <isoform>
        <id>Q6NZM9-1</id>
        <name>1</name>
        <sequence type="displayed"/>
    </isoform>
    <isoform>
        <id>Q6NZM9-2</id>
        <name>2</name>
        <sequence type="described" ref="VSP_023952 VSP_023953"/>
    </isoform>
</comment>
<comment type="domain">
    <text evidence="1">The nuclear export sequence mediates the shuttling between the nucleus and the cytoplasm.</text>
</comment>
<comment type="domain">
    <text evidence="2">The PxLPxI/L motif mediates interaction with ankyrin repeats of ANKRA2.</text>
</comment>
<comment type="PTM">
    <text evidence="2">Phosphorylated by CaMK4 at Ser-245, Ser-465 and Ser-629. Phosphorylation at other residues by CaMK2D is required for the interaction with 14-3-3. Phosphorylation at Ser-349, within the PxLPxI/L motif, impairs the binding of ANKRA2 but generates a high-affinity docking site for 14-3-3 (By similarity).</text>
</comment>
<comment type="PTM">
    <text evidence="8 9">Sumoylation on Lys-556 is promoted by the E3 SUMO-protein ligase RANBP2, and prevented by phosphorylation by CaMK4.</text>
</comment>
<comment type="similarity">
    <text evidence="15">Belongs to the histone deacetylase family. HD type 2 subfamily.</text>
</comment>
<reference key="1">
    <citation type="journal article" date="2005" name="Science">
        <title>The transcriptional landscape of the mammalian genome.</title>
        <authorList>
            <person name="Carninci P."/>
            <person name="Kasukawa T."/>
            <person name="Katayama S."/>
            <person name="Gough J."/>
            <person name="Frith M.C."/>
            <person name="Maeda N."/>
            <person name="Oyama R."/>
            <person name="Ravasi T."/>
            <person name="Lenhard B."/>
            <person name="Wells C."/>
            <person name="Kodzius R."/>
            <person name="Shimokawa K."/>
            <person name="Bajic V.B."/>
            <person name="Brenner S.E."/>
            <person name="Batalov S."/>
            <person name="Forrest A.R."/>
            <person name="Zavolan M."/>
            <person name="Davis M.J."/>
            <person name="Wilming L.G."/>
            <person name="Aidinis V."/>
            <person name="Allen J.E."/>
            <person name="Ambesi-Impiombato A."/>
            <person name="Apweiler R."/>
            <person name="Aturaliya R.N."/>
            <person name="Bailey T.L."/>
            <person name="Bansal M."/>
            <person name="Baxter L."/>
            <person name="Beisel K.W."/>
            <person name="Bersano T."/>
            <person name="Bono H."/>
            <person name="Chalk A.M."/>
            <person name="Chiu K.P."/>
            <person name="Choudhary V."/>
            <person name="Christoffels A."/>
            <person name="Clutterbuck D.R."/>
            <person name="Crowe M.L."/>
            <person name="Dalla E."/>
            <person name="Dalrymple B.P."/>
            <person name="de Bono B."/>
            <person name="Della Gatta G."/>
            <person name="di Bernardo D."/>
            <person name="Down T."/>
            <person name="Engstrom P."/>
            <person name="Fagiolini M."/>
            <person name="Faulkner G."/>
            <person name="Fletcher C.F."/>
            <person name="Fukushima T."/>
            <person name="Furuno M."/>
            <person name="Futaki S."/>
            <person name="Gariboldi M."/>
            <person name="Georgii-Hemming P."/>
            <person name="Gingeras T.R."/>
            <person name="Gojobori T."/>
            <person name="Green R.E."/>
            <person name="Gustincich S."/>
            <person name="Harbers M."/>
            <person name="Hayashi Y."/>
            <person name="Hensch T.K."/>
            <person name="Hirokawa N."/>
            <person name="Hill D."/>
            <person name="Huminiecki L."/>
            <person name="Iacono M."/>
            <person name="Ikeo K."/>
            <person name="Iwama A."/>
            <person name="Ishikawa T."/>
            <person name="Jakt M."/>
            <person name="Kanapin A."/>
            <person name="Katoh M."/>
            <person name="Kawasawa Y."/>
            <person name="Kelso J."/>
            <person name="Kitamura H."/>
            <person name="Kitano H."/>
            <person name="Kollias G."/>
            <person name="Krishnan S.P."/>
            <person name="Kruger A."/>
            <person name="Kummerfeld S.K."/>
            <person name="Kurochkin I.V."/>
            <person name="Lareau L.F."/>
            <person name="Lazarevic D."/>
            <person name="Lipovich L."/>
            <person name="Liu J."/>
            <person name="Liuni S."/>
            <person name="McWilliam S."/>
            <person name="Madan Babu M."/>
            <person name="Madera M."/>
            <person name="Marchionni L."/>
            <person name="Matsuda H."/>
            <person name="Matsuzawa S."/>
            <person name="Miki H."/>
            <person name="Mignone F."/>
            <person name="Miyake S."/>
            <person name="Morris K."/>
            <person name="Mottagui-Tabar S."/>
            <person name="Mulder N."/>
            <person name="Nakano N."/>
            <person name="Nakauchi H."/>
            <person name="Ng P."/>
            <person name="Nilsson R."/>
            <person name="Nishiguchi S."/>
            <person name="Nishikawa S."/>
            <person name="Nori F."/>
            <person name="Ohara O."/>
            <person name="Okazaki Y."/>
            <person name="Orlando V."/>
            <person name="Pang K.C."/>
            <person name="Pavan W.J."/>
            <person name="Pavesi G."/>
            <person name="Pesole G."/>
            <person name="Petrovsky N."/>
            <person name="Piazza S."/>
            <person name="Reed J."/>
            <person name="Reid J.F."/>
            <person name="Ring B.Z."/>
            <person name="Ringwald M."/>
            <person name="Rost B."/>
            <person name="Ruan Y."/>
            <person name="Salzberg S.L."/>
            <person name="Sandelin A."/>
            <person name="Schneider C."/>
            <person name="Schoenbach C."/>
            <person name="Sekiguchi K."/>
            <person name="Semple C.A."/>
            <person name="Seno S."/>
            <person name="Sessa L."/>
            <person name="Sheng Y."/>
            <person name="Shibata Y."/>
            <person name="Shimada H."/>
            <person name="Shimada K."/>
            <person name="Silva D."/>
            <person name="Sinclair B."/>
            <person name="Sperling S."/>
            <person name="Stupka E."/>
            <person name="Sugiura K."/>
            <person name="Sultana R."/>
            <person name="Takenaka Y."/>
            <person name="Taki K."/>
            <person name="Tammoja K."/>
            <person name="Tan S.L."/>
            <person name="Tang S."/>
            <person name="Taylor M.S."/>
            <person name="Tegner J."/>
            <person name="Teichmann S.A."/>
            <person name="Ueda H.R."/>
            <person name="van Nimwegen E."/>
            <person name="Verardo R."/>
            <person name="Wei C.L."/>
            <person name="Yagi K."/>
            <person name="Yamanishi H."/>
            <person name="Zabarovsky E."/>
            <person name="Zhu S."/>
            <person name="Zimmer A."/>
            <person name="Hide W."/>
            <person name="Bult C."/>
            <person name="Grimmond S.M."/>
            <person name="Teasdale R.D."/>
            <person name="Liu E.T."/>
            <person name="Brusic V."/>
            <person name="Quackenbush J."/>
            <person name="Wahlestedt C."/>
            <person name="Mattick J.S."/>
            <person name="Hume D.A."/>
            <person name="Kai C."/>
            <person name="Sasaki D."/>
            <person name="Tomaru Y."/>
            <person name="Fukuda S."/>
            <person name="Kanamori-Katayama M."/>
            <person name="Suzuki M."/>
            <person name="Aoki J."/>
            <person name="Arakawa T."/>
            <person name="Iida J."/>
            <person name="Imamura K."/>
            <person name="Itoh M."/>
            <person name="Kato T."/>
            <person name="Kawaji H."/>
            <person name="Kawagashira N."/>
            <person name="Kawashima T."/>
            <person name="Kojima M."/>
            <person name="Kondo S."/>
            <person name="Konno H."/>
            <person name="Nakano K."/>
            <person name="Ninomiya N."/>
            <person name="Nishio T."/>
            <person name="Okada M."/>
            <person name="Plessy C."/>
            <person name="Shibata K."/>
            <person name="Shiraki T."/>
            <person name="Suzuki S."/>
            <person name="Tagami M."/>
            <person name="Waki K."/>
            <person name="Watahiki A."/>
            <person name="Okamura-Oho Y."/>
            <person name="Suzuki H."/>
            <person name="Kawai J."/>
            <person name="Hayashizaki Y."/>
        </authorList>
    </citation>
    <scope>NUCLEOTIDE SEQUENCE [LARGE SCALE MRNA] (ISOFORMS 1 AND 2)</scope>
    <source>
        <strain>C57BL/6J</strain>
        <strain>NOD</strain>
        <tissue>Dendritic cell</tissue>
        <tissue>Epididymis</tissue>
        <tissue>Testis</tissue>
    </source>
</reference>
<reference key="2">
    <citation type="journal article" date="2004" name="Genome Res.">
        <title>The status, quality, and expansion of the NIH full-length cDNA project: the Mammalian Gene Collection (MGC).</title>
        <authorList>
            <consortium name="The MGC Project Team"/>
        </authorList>
    </citation>
    <scope>NUCLEOTIDE SEQUENCE [LARGE SCALE MRNA] (ISOFORM 1)</scope>
    <source>
        <strain>C57BL/6J</strain>
        <tissue>Brain</tissue>
    </source>
</reference>
<reference key="3">
    <citation type="journal article" date="2000" name="Proc. Natl. Acad. Sci. U.S.A.">
        <title>Identification of a nuclear domain with deacetylase activity.</title>
        <authorList>
            <person name="Downes M."/>
            <person name="Ordentlich P."/>
            <person name="Kao H.-Y."/>
            <person name="Alvarez J.G.A."/>
            <person name="Evans R.M."/>
        </authorList>
    </citation>
    <scope>INTERACTION WITH HDAC7</scope>
</reference>
<reference key="4">
    <citation type="journal article" date="2005" name="Mol. Cell. Biol.">
        <title>Modulation of smooth muscle gene expression by association of histone acetyltransferases and deacetylases with myocardin.</title>
        <authorList>
            <person name="Cao D."/>
            <person name="Wang Z."/>
            <person name="Zhang C.L."/>
            <person name="Oh J."/>
            <person name="Xing W."/>
            <person name="Li S."/>
            <person name="Richardson J.A."/>
            <person name="Wang D.Z."/>
            <person name="Olson E.N."/>
        </authorList>
    </citation>
    <scope>INTERACTION WITH MYOCD</scope>
</reference>
<reference key="5">
    <citation type="journal article" date="2007" name="Biochem. Biophys. Res. Commun.">
        <title>Molecular mechanism of transcriptional repression of AhR repressor involving ANKRA2, HDAC4, and HDAC5.</title>
        <authorList>
            <person name="Oshima M."/>
            <person name="Mimura J."/>
            <person name="Yamamoto M."/>
            <person name="Fujii-Kuriyama Y."/>
        </authorList>
    </citation>
    <scope>INTERACTION WITH AHRR</scope>
</reference>
<reference key="6">
    <citation type="journal article" date="2007" name="J. Biol. Chem.">
        <title>CaMKIIdelta isoforms differentially affect calcium handling but similarly regulate HDAC/MEF2 transcriptional responses.</title>
        <authorList>
            <person name="Zhang T."/>
            <person name="Kohlhaas M."/>
            <person name="Backs J."/>
            <person name="Mishra S."/>
            <person name="Phillips W."/>
            <person name="Dybkova N."/>
            <person name="Chang S."/>
            <person name="Ling H."/>
            <person name="Bers D.M."/>
            <person name="Maier L.S."/>
            <person name="Olson E.N."/>
            <person name="Brown J.H."/>
        </authorList>
    </citation>
    <scope>PHOSPHORYLATION BY CAMK2D</scope>
</reference>
<reference key="7">
    <citation type="journal article" date="2007" name="Nat. Med.">
        <title>SIK1 is a class II HDAC kinase that promotes survival of skeletal myocytes.</title>
        <authorList>
            <person name="Berdeaux R."/>
            <person name="Goebel N."/>
            <person name="Banaszynski L."/>
            <person name="Takemori H."/>
            <person name="Wandless T."/>
            <person name="Shelton G.D."/>
            <person name="Montminy M."/>
        </authorList>
    </citation>
    <scope>PHOSPHORYLATION AT SER-245 AND SER-465</scope>
</reference>
<reference key="8">
    <citation type="journal article" date="2009" name="Mol. Cell. Proteomics">
        <title>Large scale localization of protein phosphorylation by use of electron capture dissociation mass spectrometry.</title>
        <authorList>
            <person name="Sweet S.M."/>
            <person name="Bailey C.M."/>
            <person name="Cunningham D.L."/>
            <person name="Heath J.K."/>
            <person name="Cooper H.J."/>
        </authorList>
    </citation>
    <scope>PHOSPHORYLATION [LARGE SCALE ANALYSIS] AT SER-465</scope>
    <scope>IDENTIFICATION BY MASS SPECTROMETRY [LARGE SCALE ANALYSIS]</scope>
    <source>
        <tissue>Embryonic fibroblast</tissue>
    </source>
</reference>
<reference key="9">
    <citation type="journal article" date="2010" name="Cell">
        <title>A tissue-specific atlas of mouse protein phosphorylation and expression.</title>
        <authorList>
            <person name="Huttlin E.L."/>
            <person name="Jedrychowski M.P."/>
            <person name="Elias J.E."/>
            <person name="Goswami T."/>
            <person name="Rad R."/>
            <person name="Beausoleil S.A."/>
            <person name="Villen J."/>
            <person name="Haas W."/>
            <person name="Sowa M.E."/>
            <person name="Gygi S.P."/>
        </authorList>
    </citation>
    <scope>PHOSPHORYLATION [LARGE SCALE ANALYSIS] AT SER-209 AND SER-562</scope>
    <scope>IDENTIFICATION BY MASS SPECTROMETRY [LARGE SCALE ANALYSIS]</scope>
    <source>
        <tissue>Brain</tissue>
        <tissue>Lung</tissue>
    </source>
</reference>
<reference key="10">
    <citation type="journal article" date="2011" name="J. Bone Miner. Res.">
        <title>Histone deacetylase inhibitor MS-275 stimulates bone formation in part by enhancing Dhx36-mediated TNAP transcription.</title>
        <authorList>
            <person name="Kim H.N."/>
            <person name="Lee J.H."/>
            <person name="Bae S.C."/>
            <person name="Ryoo H.M."/>
            <person name="Kim H.H."/>
            <person name="Ha H."/>
            <person name="Lee Z.H."/>
        </authorList>
    </citation>
    <scope>INTERACTION WITH DHX36</scope>
</reference>
<reference key="11">
    <citation type="journal article" date="2012" name="Development">
        <title>SIK3 is essential for chondrocyte hypertrophy during skeletal development in mice.</title>
        <authorList>
            <person name="Sasagawa S."/>
            <person name="Takemori H."/>
            <person name="Uebi T."/>
            <person name="Ikegami D."/>
            <person name="Hiramatsu K."/>
            <person name="Ikegawa S."/>
            <person name="Yoshikawa H."/>
            <person name="Tsumaki N."/>
        </authorList>
    </citation>
    <scope>INTERACTION WITH SIK3</scope>
    <scope>SUBCELLULAR LOCATION</scope>
</reference>
<reference key="12">
    <citation type="journal article" date="2012" name="J. Immunol.">
        <title>Epigenetic silencing of CD8 genes by ThPOK-mediated deacetylation during CD4 T cell differentiation.</title>
        <authorList>
            <person name="Rui J."/>
            <person name="Liu H."/>
            <person name="Zhu X."/>
            <person name="Cui Y."/>
            <person name="Liu X."/>
        </authorList>
    </citation>
    <scope>INTERACTION WITH ZBTB7B</scope>
</reference>
<organism>
    <name type="scientific">Mus musculus</name>
    <name type="common">Mouse</name>
    <dbReference type="NCBI Taxonomy" id="10090"/>
    <lineage>
        <taxon>Eukaryota</taxon>
        <taxon>Metazoa</taxon>
        <taxon>Chordata</taxon>
        <taxon>Craniata</taxon>
        <taxon>Vertebrata</taxon>
        <taxon>Euteleostomi</taxon>
        <taxon>Mammalia</taxon>
        <taxon>Eutheria</taxon>
        <taxon>Euarchontoglires</taxon>
        <taxon>Glires</taxon>
        <taxon>Rodentia</taxon>
        <taxon>Myomorpha</taxon>
        <taxon>Muroidea</taxon>
        <taxon>Muridae</taxon>
        <taxon>Murinae</taxon>
        <taxon>Mus</taxon>
        <taxon>Mus</taxon>
    </lineage>
</organism>
<sequence>MSSQSHPDGLSGRDQPVELLNPARVNHMPSTVDVATALPLQVAPTAVPMDLRLDHQFSLPLEPALREQQLQQELLALKQKQQIQRQILIAEFQRQHEQLSRQHEAQLHEHIKQQQEMLAMKHQQELLEHQRKLERHRQEQELEKQHREQKLQQLKNKEKGKESAVASTEVKMKLQEFVLNKKKALAHRNLNHCISSDPRYWYGKTQHSSLDQSSPPQSGVSASYNHPVLGMYDAKDDFPLRKTASEPNLKLRSRLKQKVAERRSSPLLRRKDGPVATALKKRPLDVTDSACSSAPGSGPSSPNSSSGNVSTENGIAPTVPSAPAETSLAHRLVTREGSVAPLPLYTSPSLPNITLGLPATGPAAGAAGQQDAERLALPALQQRILFPGTHLTPYLSTSPLERDGAAAHNPLLQHMVLLEQPPTQTPLVTGLGALPLHSQSLVGADRVSPSIHKLRQHRPLGRTQSAPLPQNAQALQHLVIQQQHQQFLEKHKQQFQQQQLHLSKIISKPSEPPRQPESHPEETEEELREHQALLDEPYLDRLPGQKEPSLAGVQVKQEPIESEEEEAEATRETEPGQRPATEQELLFRQQALLLEQQRIHQLRNYQASMEAAGIPVSFGSHRPLSRAQSSPASATFPMSVQEPPTKPRFTTGLVYDTLMLKHQCTCGNTNSHPEHAGRIQSIWSRLQETGLRGKCECIRGRKATLEELQTVHSEAHTLLYGTNPLNRQKLDSSLTSVFVRLPCGGVGVDSDTIWNEVHSSGAARLAVGCVVELVFKVATGELKNGFAVVRPPGHHAEESTPMGFCYFNSVAVAAKLLQQRLNVSKILIVDWDVHHGNGTQQAFYNDPNVLYMSLHRYDDGNFFPGSGAPDEVGTGPGVGFNVNMAFTGGLEPPMGDAEYLAAFRTVVMPIANEFAPDVVLVSSGFDAVEGHPTPLGGYNLSAKCFGYLTKQLMGLAGGRLVLALEGGHDLTAICDASEACVSALLGNELEPLPEKVLHQRPNANAVHSMEKVMDIHSKYWRCLQRLSSTVGHSLIEAQKCEKEEAETVTAMASLSVGVKPAEKRSEEEPMEEEPPL</sequence>
<proteinExistence type="evidence at protein level"/>
<name>HDAC4_MOUSE</name>
<feature type="chain" id="PRO_0000281033" description="Histone deacetylase 4">
    <location>
        <begin position="1"/>
        <end position="1076"/>
    </location>
</feature>
<feature type="region of interest" description="Interaction with MEF2A" evidence="1">
    <location>
        <begin position="117"/>
        <end position="312"/>
    </location>
</feature>
<feature type="region of interest" description="Disordered" evidence="5">
    <location>
        <begin position="132"/>
        <end position="166"/>
    </location>
</feature>
<feature type="region of interest" description="Disordered" evidence="5">
    <location>
        <begin position="205"/>
        <end position="225"/>
    </location>
</feature>
<feature type="region of interest" description="Disordered" evidence="5">
    <location>
        <begin position="239"/>
        <end position="323"/>
    </location>
</feature>
<feature type="region of interest" description="Disordered" evidence="5">
    <location>
        <begin position="506"/>
        <end position="529"/>
    </location>
</feature>
<feature type="region of interest" description="Disordered" evidence="5">
    <location>
        <begin position="541"/>
        <end position="580"/>
    </location>
</feature>
<feature type="region of interest" description="Disordered" evidence="5">
    <location>
        <begin position="622"/>
        <end position="645"/>
    </location>
</feature>
<feature type="region of interest" description="Histone deacetylase" evidence="1">
    <location>
        <begin position="652"/>
        <end position="1076"/>
    </location>
</feature>
<feature type="coiled-coil region" evidence="4">
    <location>
        <begin position="66"/>
        <end position="169"/>
    </location>
</feature>
<feature type="short sequence motif" description="PxLPxI/L motif; mediates interaction with ANKRA2 and 14-3-3 proteins" evidence="2">
    <location>
        <begin position="348"/>
        <end position="353"/>
    </location>
</feature>
<feature type="short sequence motif" description="Nuclear export signal" evidence="1">
    <location>
        <begin position="1043"/>
        <end position="1076"/>
    </location>
</feature>
<feature type="compositionally biased region" description="Basic and acidic residues" evidence="5">
    <location>
        <begin position="132"/>
        <end position="162"/>
    </location>
</feature>
<feature type="compositionally biased region" description="Polar residues" evidence="5">
    <location>
        <begin position="205"/>
        <end position="224"/>
    </location>
</feature>
<feature type="compositionally biased region" description="Basic and acidic residues" evidence="5">
    <location>
        <begin position="258"/>
        <end position="273"/>
    </location>
</feature>
<feature type="compositionally biased region" description="Low complexity" evidence="5">
    <location>
        <begin position="289"/>
        <end position="310"/>
    </location>
</feature>
<feature type="compositionally biased region" description="Basic and acidic residues" evidence="5">
    <location>
        <begin position="514"/>
        <end position="529"/>
    </location>
</feature>
<feature type="compositionally biased region" description="Polar residues" evidence="5">
    <location>
        <begin position="626"/>
        <end position="638"/>
    </location>
</feature>
<feature type="active site" evidence="1">
    <location>
        <position position="795"/>
    </location>
</feature>
<feature type="binding site" evidence="1">
    <location>
        <position position="664"/>
    </location>
    <ligand>
        <name>Zn(2+)</name>
        <dbReference type="ChEBI" id="CHEBI:29105"/>
    </ligand>
</feature>
<feature type="binding site" evidence="1">
    <location>
        <position position="666"/>
    </location>
    <ligand>
        <name>Zn(2+)</name>
        <dbReference type="ChEBI" id="CHEBI:29105"/>
    </ligand>
</feature>
<feature type="binding site" evidence="1">
    <location>
        <position position="672"/>
    </location>
    <ligand>
        <name>Zn(2+)</name>
        <dbReference type="ChEBI" id="CHEBI:29105"/>
    </ligand>
</feature>
<feature type="binding site" evidence="1">
    <location>
        <position position="743"/>
    </location>
    <ligand>
        <name>Zn(2+)</name>
        <dbReference type="ChEBI" id="CHEBI:29105"/>
    </ligand>
</feature>
<feature type="modified residue" description="Phosphoserine" evidence="17">
    <location>
        <position position="209"/>
    </location>
</feature>
<feature type="modified residue" description="Phosphoserine; by CaMK4 and SIK1" evidence="8">
    <location>
        <position position="245"/>
    </location>
</feature>
<feature type="modified residue" description="Phosphoserine" evidence="2">
    <location>
        <position position="349"/>
    </location>
</feature>
<feature type="modified residue" description="Phosphoserine; by CaMK4 and SIK1" evidence="8 16">
    <location>
        <position position="465"/>
    </location>
</feature>
<feature type="modified residue" description="Phosphoserine" evidence="17">
    <location>
        <position position="562"/>
    </location>
</feature>
<feature type="modified residue" description="Phosphoserine; by CaMK4" evidence="2">
    <location>
        <position position="629"/>
    </location>
</feature>
<feature type="modified residue" description="Phosphoserine" evidence="2">
    <location>
        <position position="630"/>
    </location>
</feature>
<feature type="cross-link" description="Glycyl lysine isopeptide (Lys-Gly) (interchain with G-Cter in SUMO)" evidence="1">
    <location>
        <position position="556"/>
    </location>
</feature>
<feature type="splice variant" id="VSP_023952" description="In isoform 2." evidence="14">
    <location>
        <begin position="1"/>
        <end position="171"/>
    </location>
</feature>
<feature type="splice variant" id="VSP_023953" description="In isoform 2." evidence="14">
    <original>S</original>
    <variation>SKKLLG</variation>
    <location>
        <position position="732"/>
    </location>
</feature>
<feature type="sequence conflict" description="In Ref. 1; BAE33147." evidence="15" ref="1">
    <original>A</original>
    <variation>S</variation>
    <location>
        <position position="569"/>
    </location>
</feature>
<feature type="sequence conflict" description="In Ref. 1; BAE33147." evidence="15" ref="1">
    <original>R</original>
    <variation>K</variation>
    <location>
        <position position="904"/>
    </location>
</feature>